<keyword id="KW-0903">Direct protein sequencing</keyword>
<keyword id="KW-0560">Oxidoreductase</keyword>
<protein>
    <recommendedName>
        <fullName>Ferredoxin-thioredoxin reductase, variable chain</fullName>
        <shortName>FTR-V</shortName>
    </recommendedName>
    <alternativeName>
        <fullName>Ferredoxin-thioredoxin reductase subunit A</fullName>
        <shortName>FTR-A</shortName>
    </alternativeName>
</protein>
<gene>
    <name type="primary">ftrV</name>
    <name type="ordered locus">syc0418_c</name>
</gene>
<sequence>MNVGDRVRVKESVVVYHHPDHRNQAFDLKDAEGEIAAILTEWNGKPISANFPYLVSFSNKFRAHLRDFELEVI</sequence>
<proteinExistence type="evidence at protein level"/>
<accession>P24018</accession>
<comment type="function">
    <text>Variable subunit of the ferredoxin-thioredoxin reductase (FTR), which catalyzes the two-electron reduction of thioredoxins by the electrons provided by reduced ferredoxin.</text>
</comment>
<comment type="subunit">
    <text>Heterodimer of subunit A (variable subunit) and subunit B (catalytic subunit). Heterodimeric FTR forms a complex with ferredoxin and thioredoxin.</text>
</comment>
<comment type="similarity">
    <text evidence="2">Belongs to the ferredoxin thioredoxin reductase alpha subunit family.</text>
</comment>
<evidence type="ECO:0000250" key="1"/>
<evidence type="ECO:0000305" key="2"/>
<feature type="chain" id="PRO_0000087365" description="Ferredoxin-thioredoxin reductase, variable chain">
    <location>
        <begin position="1"/>
        <end position="73"/>
    </location>
</feature>
<feature type="region of interest" description="Interaction with ferredoxin" evidence="1">
    <location>
        <begin position="43"/>
        <end position="46"/>
    </location>
</feature>
<reference key="1">
    <citation type="journal article" date="1991" name="J. Bacteriol.">
        <title>The ferredoxin-thioredoxin reductase variable subunit gene from Anacystis nidulans.</title>
        <authorList>
            <person name="Szekeres M."/>
            <person name="Droux M."/>
            <person name="Buchanan B.B."/>
        </authorList>
    </citation>
    <scope>NUCLEOTIDE SEQUENCE [GENOMIC DNA]</scope>
    <scope>PROTEIN SEQUENCE OF 1-15</scope>
</reference>
<reference key="2">
    <citation type="journal article" date="2007" name="Photosyn. Res.">
        <title>Complete nucleotide sequence of the freshwater unicellular cyanobacterium Synechococcus elongatus PCC 6301 chromosome: gene content and organization.</title>
        <authorList>
            <person name="Sugita C."/>
            <person name="Ogata K."/>
            <person name="Shikata M."/>
            <person name="Jikuya H."/>
            <person name="Takano J."/>
            <person name="Furumichi M."/>
            <person name="Kanehisa M."/>
            <person name="Omata T."/>
            <person name="Sugiura M."/>
            <person name="Sugita M."/>
        </authorList>
    </citation>
    <scope>NUCLEOTIDE SEQUENCE [LARGE SCALE GENOMIC DNA]</scope>
    <source>
        <strain>ATCC 27144 / PCC 6301 / SAUG 1402/1</strain>
    </source>
</reference>
<organism>
    <name type="scientific">Synechococcus sp. (strain ATCC 27144 / PCC 6301 / SAUG 1402/1)</name>
    <name type="common">Anacystis nidulans</name>
    <dbReference type="NCBI Taxonomy" id="269084"/>
    <lineage>
        <taxon>Bacteria</taxon>
        <taxon>Bacillati</taxon>
        <taxon>Cyanobacteriota</taxon>
        <taxon>Cyanophyceae</taxon>
        <taxon>Synechococcales</taxon>
        <taxon>Synechococcaceae</taxon>
        <taxon>Synechococcus</taxon>
    </lineage>
</organism>
<name>FTRV_SYNP6</name>
<dbReference type="EMBL" id="X54196">
    <property type="protein sequence ID" value="CAA38112.1"/>
    <property type="molecule type" value="Genomic_DNA"/>
</dbReference>
<dbReference type="EMBL" id="AP008231">
    <property type="protein sequence ID" value="BAD78608.1"/>
    <property type="molecule type" value="Genomic_DNA"/>
</dbReference>
<dbReference type="RefSeq" id="WP_011242730.1">
    <property type="nucleotide sequence ID" value="NZ_CP085785.1"/>
</dbReference>
<dbReference type="SMR" id="P24018"/>
<dbReference type="KEGG" id="syc:syc0418_c"/>
<dbReference type="eggNOG" id="ENOG5032ZFB">
    <property type="taxonomic scope" value="Bacteria"/>
</dbReference>
<dbReference type="Proteomes" id="UP000001175">
    <property type="component" value="Chromosome"/>
</dbReference>
<dbReference type="GO" id="GO:0016491">
    <property type="term" value="F:oxidoreductase activity"/>
    <property type="evidence" value="ECO:0007669"/>
    <property type="project" value="UniProtKB-KW"/>
</dbReference>
<dbReference type="GO" id="GO:0015979">
    <property type="term" value="P:photosynthesis"/>
    <property type="evidence" value="ECO:0007669"/>
    <property type="project" value="InterPro"/>
</dbReference>
<dbReference type="Gene3D" id="2.30.30.50">
    <property type="match status" value="1"/>
</dbReference>
<dbReference type="InterPro" id="IPR008990">
    <property type="entry name" value="Elect_transpt_acc-like_dom_sf"/>
</dbReference>
<dbReference type="InterPro" id="IPR004207">
    <property type="entry name" value="Fd_thioredoxin_Rdtase_alpha"/>
</dbReference>
<dbReference type="InterPro" id="IPR044166">
    <property type="entry name" value="FTRV"/>
</dbReference>
<dbReference type="PANTHER" id="PTHR46937:SF4">
    <property type="entry name" value="FERREDOXIN-THIOREDOXIN REDUCTASE SUBUNIT A1, CHLOROPLASTIC"/>
    <property type="match status" value="1"/>
</dbReference>
<dbReference type="PANTHER" id="PTHR46937">
    <property type="entry name" value="FERREDOXIN-THIOREDOXIN REDUCTASE, VARIABLE CHAIN"/>
    <property type="match status" value="1"/>
</dbReference>
<dbReference type="Pfam" id="PF02941">
    <property type="entry name" value="FeThRed_A"/>
    <property type="match status" value="1"/>
</dbReference>
<dbReference type="SUPFAM" id="SSF50090">
    <property type="entry name" value="Electron transport accessory proteins"/>
    <property type="match status" value="1"/>
</dbReference>